<gene>
    <name evidence="1" type="primary">nadK</name>
    <name type="ordered locus">NT01EI_3063</name>
</gene>
<comment type="function">
    <text evidence="1">Involved in the regulation of the intracellular balance of NAD and NADP, and is a key enzyme in the biosynthesis of NADP. Catalyzes specifically the phosphorylation on 2'-hydroxyl of the adenosine moiety of NAD to yield NADP.</text>
</comment>
<comment type="catalytic activity">
    <reaction evidence="1">
        <text>NAD(+) + ATP = ADP + NADP(+) + H(+)</text>
        <dbReference type="Rhea" id="RHEA:18629"/>
        <dbReference type="ChEBI" id="CHEBI:15378"/>
        <dbReference type="ChEBI" id="CHEBI:30616"/>
        <dbReference type="ChEBI" id="CHEBI:57540"/>
        <dbReference type="ChEBI" id="CHEBI:58349"/>
        <dbReference type="ChEBI" id="CHEBI:456216"/>
        <dbReference type="EC" id="2.7.1.23"/>
    </reaction>
</comment>
<comment type="cofactor">
    <cofactor evidence="1">
        <name>a divalent metal cation</name>
        <dbReference type="ChEBI" id="CHEBI:60240"/>
    </cofactor>
</comment>
<comment type="subcellular location">
    <subcellularLocation>
        <location evidence="1">Cytoplasm</location>
    </subcellularLocation>
</comment>
<comment type="similarity">
    <text evidence="1">Belongs to the NAD kinase family.</text>
</comment>
<proteinExistence type="inferred from homology"/>
<feature type="chain" id="PRO_1000205414" description="NAD kinase">
    <location>
        <begin position="1"/>
        <end position="292"/>
    </location>
</feature>
<feature type="active site" description="Proton acceptor" evidence="1">
    <location>
        <position position="73"/>
    </location>
</feature>
<feature type="binding site" evidence="1">
    <location>
        <begin position="73"/>
        <end position="74"/>
    </location>
    <ligand>
        <name>NAD(+)</name>
        <dbReference type="ChEBI" id="CHEBI:57540"/>
    </ligand>
</feature>
<feature type="binding site" evidence="1">
    <location>
        <begin position="147"/>
        <end position="148"/>
    </location>
    <ligand>
        <name>NAD(+)</name>
        <dbReference type="ChEBI" id="CHEBI:57540"/>
    </ligand>
</feature>
<feature type="binding site" evidence="1">
    <location>
        <position position="158"/>
    </location>
    <ligand>
        <name>NAD(+)</name>
        <dbReference type="ChEBI" id="CHEBI:57540"/>
    </ligand>
</feature>
<feature type="binding site" evidence="1">
    <location>
        <position position="175"/>
    </location>
    <ligand>
        <name>NAD(+)</name>
        <dbReference type="ChEBI" id="CHEBI:57540"/>
    </ligand>
</feature>
<feature type="binding site" evidence="1">
    <location>
        <position position="177"/>
    </location>
    <ligand>
        <name>NAD(+)</name>
        <dbReference type="ChEBI" id="CHEBI:57540"/>
    </ligand>
</feature>
<feature type="binding site" evidence="1">
    <location>
        <begin position="188"/>
        <end position="193"/>
    </location>
    <ligand>
        <name>NAD(+)</name>
        <dbReference type="ChEBI" id="CHEBI:57540"/>
    </ligand>
</feature>
<feature type="binding site" evidence="1">
    <location>
        <position position="247"/>
    </location>
    <ligand>
        <name>NAD(+)</name>
        <dbReference type="ChEBI" id="CHEBI:57540"/>
    </ligand>
</feature>
<organism>
    <name type="scientific">Edwardsiella ictaluri (strain 93-146)</name>
    <dbReference type="NCBI Taxonomy" id="634503"/>
    <lineage>
        <taxon>Bacteria</taxon>
        <taxon>Pseudomonadati</taxon>
        <taxon>Pseudomonadota</taxon>
        <taxon>Gammaproteobacteria</taxon>
        <taxon>Enterobacterales</taxon>
        <taxon>Hafniaceae</taxon>
        <taxon>Edwardsiella</taxon>
    </lineage>
</organism>
<name>NADK_EDWI9</name>
<keyword id="KW-0067">ATP-binding</keyword>
<keyword id="KW-0963">Cytoplasm</keyword>
<keyword id="KW-0418">Kinase</keyword>
<keyword id="KW-0520">NAD</keyword>
<keyword id="KW-0521">NADP</keyword>
<keyword id="KW-0547">Nucleotide-binding</keyword>
<keyword id="KW-0808">Transferase</keyword>
<accession>C5BAK8</accession>
<evidence type="ECO:0000255" key="1">
    <source>
        <dbReference type="HAMAP-Rule" id="MF_00361"/>
    </source>
</evidence>
<reference key="1">
    <citation type="submission" date="2009-03" db="EMBL/GenBank/DDBJ databases">
        <title>Complete genome sequence of Edwardsiella ictaluri 93-146.</title>
        <authorList>
            <person name="Williams M.L."/>
            <person name="Gillaspy A.F."/>
            <person name="Dyer D.W."/>
            <person name="Thune R.L."/>
            <person name="Waldbieser G.C."/>
            <person name="Schuster S.C."/>
            <person name="Gipson J."/>
            <person name="Zaitshik J."/>
            <person name="Landry C."/>
            <person name="Lawrence M.L."/>
        </authorList>
    </citation>
    <scope>NUCLEOTIDE SEQUENCE [LARGE SCALE GENOMIC DNA]</scope>
    <source>
        <strain>93-146</strain>
    </source>
</reference>
<dbReference type="EC" id="2.7.1.23" evidence="1"/>
<dbReference type="EMBL" id="CP001600">
    <property type="protein sequence ID" value="ACR70215.1"/>
    <property type="molecule type" value="Genomic_DNA"/>
</dbReference>
<dbReference type="RefSeq" id="WP_015872303.1">
    <property type="nucleotide sequence ID" value="NZ_CP169062.1"/>
</dbReference>
<dbReference type="SMR" id="C5BAK8"/>
<dbReference type="STRING" id="67780.B6E78_07180"/>
<dbReference type="GeneID" id="69539936"/>
<dbReference type="KEGG" id="eic:NT01EI_3063"/>
<dbReference type="HOGENOM" id="CLU_008831_0_1_6"/>
<dbReference type="OrthoDB" id="9774737at2"/>
<dbReference type="Proteomes" id="UP000001485">
    <property type="component" value="Chromosome"/>
</dbReference>
<dbReference type="GO" id="GO:0005737">
    <property type="term" value="C:cytoplasm"/>
    <property type="evidence" value="ECO:0007669"/>
    <property type="project" value="UniProtKB-SubCell"/>
</dbReference>
<dbReference type="GO" id="GO:0005524">
    <property type="term" value="F:ATP binding"/>
    <property type="evidence" value="ECO:0007669"/>
    <property type="project" value="UniProtKB-KW"/>
</dbReference>
<dbReference type="GO" id="GO:0046872">
    <property type="term" value="F:metal ion binding"/>
    <property type="evidence" value="ECO:0007669"/>
    <property type="project" value="UniProtKB-UniRule"/>
</dbReference>
<dbReference type="GO" id="GO:0051287">
    <property type="term" value="F:NAD binding"/>
    <property type="evidence" value="ECO:0007669"/>
    <property type="project" value="UniProtKB-ARBA"/>
</dbReference>
<dbReference type="GO" id="GO:0003951">
    <property type="term" value="F:NAD+ kinase activity"/>
    <property type="evidence" value="ECO:0007669"/>
    <property type="project" value="UniProtKB-UniRule"/>
</dbReference>
<dbReference type="GO" id="GO:0019674">
    <property type="term" value="P:NAD metabolic process"/>
    <property type="evidence" value="ECO:0007669"/>
    <property type="project" value="InterPro"/>
</dbReference>
<dbReference type="GO" id="GO:0006741">
    <property type="term" value="P:NADP biosynthetic process"/>
    <property type="evidence" value="ECO:0007669"/>
    <property type="project" value="UniProtKB-UniRule"/>
</dbReference>
<dbReference type="FunFam" id="2.60.200.30:FF:000001">
    <property type="entry name" value="NAD kinase"/>
    <property type="match status" value="1"/>
</dbReference>
<dbReference type="FunFam" id="3.40.50.10330:FF:000004">
    <property type="entry name" value="NAD kinase"/>
    <property type="match status" value="1"/>
</dbReference>
<dbReference type="Gene3D" id="3.40.50.10330">
    <property type="entry name" value="Probable inorganic polyphosphate/atp-NAD kinase, domain 1"/>
    <property type="match status" value="1"/>
</dbReference>
<dbReference type="Gene3D" id="2.60.200.30">
    <property type="entry name" value="Probable inorganic polyphosphate/atp-NAD kinase, domain 2"/>
    <property type="match status" value="1"/>
</dbReference>
<dbReference type="HAMAP" id="MF_00361">
    <property type="entry name" value="NAD_kinase"/>
    <property type="match status" value="1"/>
</dbReference>
<dbReference type="InterPro" id="IPR017438">
    <property type="entry name" value="ATP-NAD_kinase_N"/>
</dbReference>
<dbReference type="InterPro" id="IPR017437">
    <property type="entry name" value="ATP-NAD_kinase_PpnK-typ_C"/>
</dbReference>
<dbReference type="InterPro" id="IPR016064">
    <property type="entry name" value="NAD/diacylglycerol_kinase_sf"/>
</dbReference>
<dbReference type="InterPro" id="IPR002504">
    <property type="entry name" value="NADK"/>
</dbReference>
<dbReference type="NCBIfam" id="NF002306">
    <property type="entry name" value="PRK01231.1"/>
    <property type="match status" value="1"/>
</dbReference>
<dbReference type="NCBIfam" id="NF002893">
    <property type="entry name" value="PRK03378.1"/>
    <property type="match status" value="1"/>
</dbReference>
<dbReference type="PANTHER" id="PTHR20275">
    <property type="entry name" value="NAD KINASE"/>
    <property type="match status" value="1"/>
</dbReference>
<dbReference type="PANTHER" id="PTHR20275:SF0">
    <property type="entry name" value="NAD KINASE"/>
    <property type="match status" value="1"/>
</dbReference>
<dbReference type="Pfam" id="PF01513">
    <property type="entry name" value="NAD_kinase"/>
    <property type="match status" value="1"/>
</dbReference>
<dbReference type="Pfam" id="PF20143">
    <property type="entry name" value="NAD_kinase_C"/>
    <property type="match status" value="1"/>
</dbReference>
<dbReference type="SUPFAM" id="SSF111331">
    <property type="entry name" value="NAD kinase/diacylglycerol kinase-like"/>
    <property type="match status" value="1"/>
</dbReference>
<sequence>MNKRFESIGLVGHPRHPAALATHEMLFHWLTGKGYPVIVERQIARDLKLQHALTGTLADIGQQADLAVVVGGDGNMLGAARILARYDVDVIGVNRGNLGFLTDLDPDNAKQQLSCVLEGEYSRERRFLLEVKVCRDGQMHRRSTAINEVVLHPGKVAHMIEFEVYINDTFAFSQRSDGLIISTPTGSTAYSLSAGGPILAPTLDAIALVPMFPHTLSARPLVIDSNSKIHLRFSHFSNELEISCDSQIALPIQQGEEVIVQRSPFYLSLIHPKDYSYFNTLSSKLGWSKKLF</sequence>
<protein>
    <recommendedName>
        <fullName evidence="1">NAD kinase</fullName>
        <ecNumber evidence="1">2.7.1.23</ecNumber>
    </recommendedName>
    <alternativeName>
        <fullName evidence="1">ATP-dependent NAD kinase</fullName>
    </alternativeName>
</protein>